<name>NADK_TRIL1</name>
<gene>
    <name evidence="1" type="primary">nadK</name>
    <name type="ordered locus">Glov_2681</name>
</gene>
<accession>B3E6Y9</accession>
<protein>
    <recommendedName>
        <fullName evidence="1">NAD kinase</fullName>
        <ecNumber evidence="1">2.7.1.23</ecNumber>
    </recommendedName>
    <alternativeName>
        <fullName evidence="1">ATP-dependent NAD kinase</fullName>
    </alternativeName>
</protein>
<evidence type="ECO:0000255" key="1">
    <source>
        <dbReference type="HAMAP-Rule" id="MF_00361"/>
    </source>
</evidence>
<dbReference type="EC" id="2.7.1.23" evidence="1"/>
<dbReference type="EMBL" id="CP001089">
    <property type="protein sequence ID" value="ACD96394.1"/>
    <property type="molecule type" value="Genomic_DNA"/>
</dbReference>
<dbReference type="RefSeq" id="WP_012470724.1">
    <property type="nucleotide sequence ID" value="NC_010814.1"/>
</dbReference>
<dbReference type="SMR" id="B3E6Y9"/>
<dbReference type="STRING" id="398767.Glov_2681"/>
<dbReference type="KEGG" id="glo:Glov_2681"/>
<dbReference type="eggNOG" id="COG0061">
    <property type="taxonomic scope" value="Bacteria"/>
</dbReference>
<dbReference type="HOGENOM" id="CLU_008831_0_1_7"/>
<dbReference type="OrthoDB" id="9774737at2"/>
<dbReference type="Proteomes" id="UP000002420">
    <property type="component" value="Chromosome"/>
</dbReference>
<dbReference type="GO" id="GO:0005737">
    <property type="term" value="C:cytoplasm"/>
    <property type="evidence" value="ECO:0007669"/>
    <property type="project" value="UniProtKB-SubCell"/>
</dbReference>
<dbReference type="GO" id="GO:0005524">
    <property type="term" value="F:ATP binding"/>
    <property type="evidence" value="ECO:0007669"/>
    <property type="project" value="UniProtKB-KW"/>
</dbReference>
<dbReference type="GO" id="GO:0046872">
    <property type="term" value="F:metal ion binding"/>
    <property type="evidence" value="ECO:0007669"/>
    <property type="project" value="UniProtKB-UniRule"/>
</dbReference>
<dbReference type="GO" id="GO:0051287">
    <property type="term" value="F:NAD binding"/>
    <property type="evidence" value="ECO:0007669"/>
    <property type="project" value="UniProtKB-ARBA"/>
</dbReference>
<dbReference type="GO" id="GO:0003951">
    <property type="term" value="F:NAD+ kinase activity"/>
    <property type="evidence" value="ECO:0007669"/>
    <property type="project" value="UniProtKB-UniRule"/>
</dbReference>
<dbReference type="GO" id="GO:0019674">
    <property type="term" value="P:NAD metabolic process"/>
    <property type="evidence" value="ECO:0007669"/>
    <property type="project" value="InterPro"/>
</dbReference>
<dbReference type="GO" id="GO:0006741">
    <property type="term" value="P:NADP biosynthetic process"/>
    <property type="evidence" value="ECO:0007669"/>
    <property type="project" value="UniProtKB-UniRule"/>
</dbReference>
<dbReference type="FunFam" id="2.60.200.30:FF:000009">
    <property type="entry name" value="Poly(P)/ATP NAD kinase"/>
    <property type="match status" value="1"/>
</dbReference>
<dbReference type="Gene3D" id="3.40.50.10330">
    <property type="entry name" value="Probable inorganic polyphosphate/atp-NAD kinase, domain 1"/>
    <property type="match status" value="1"/>
</dbReference>
<dbReference type="Gene3D" id="2.60.200.30">
    <property type="entry name" value="Probable inorganic polyphosphate/atp-NAD kinase, domain 2"/>
    <property type="match status" value="1"/>
</dbReference>
<dbReference type="HAMAP" id="MF_00361">
    <property type="entry name" value="NAD_kinase"/>
    <property type="match status" value="1"/>
</dbReference>
<dbReference type="InterPro" id="IPR017438">
    <property type="entry name" value="ATP-NAD_kinase_N"/>
</dbReference>
<dbReference type="InterPro" id="IPR017437">
    <property type="entry name" value="ATP-NAD_kinase_PpnK-typ_C"/>
</dbReference>
<dbReference type="InterPro" id="IPR016064">
    <property type="entry name" value="NAD/diacylglycerol_kinase_sf"/>
</dbReference>
<dbReference type="InterPro" id="IPR002504">
    <property type="entry name" value="NADK"/>
</dbReference>
<dbReference type="PANTHER" id="PTHR20275">
    <property type="entry name" value="NAD KINASE"/>
    <property type="match status" value="1"/>
</dbReference>
<dbReference type="PANTHER" id="PTHR20275:SF0">
    <property type="entry name" value="NAD KINASE"/>
    <property type="match status" value="1"/>
</dbReference>
<dbReference type="Pfam" id="PF01513">
    <property type="entry name" value="NAD_kinase"/>
    <property type="match status" value="1"/>
</dbReference>
<dbReference type="Pfam" id="PF20143">
    <property type="entry name" value="NAD_kinase_C"/>
    <property type="match status" value="1"/>
</dbReference>
<dbReference type="SUPFAM" id="SSF111331">
    <property type="entry name" value="NAD kinase/diacylglycerol kinase-like"/>
    <property type="match status" value="1"/>
</dbReference>
<sequence>MKQVAIFAKVHDPRCQGVASELVTWLEERKCLPLVDTHLARHVGYARGLTEKQIRDRAELVVVLGGDGTLISVARLFSSRQVPIVGVNLGSLGFLTEITVEQLYPVLEQCLADSHRITERMMLDVTVTRGDQEISHCQVLNDAVINKGALARIIELEARVNDDFLTNFKADGLIISTPTGSTGYSLSAGGPIVQPLMKCVLITPICPHTLTNRPIVLSYQSVIRITVKSSFDEMVYLTLDGQVGVELQEGDCIEVSRAETTTALVTSPEKDYFAILRAKLKWGER</sequence>
<reference key="1">
    <citation type="submission" date="2008-05" db="EMBL/GenBank/DDBJ databases">
        <title>Complete sequence of chromosome of Geobacter lovleyi SZ.</title>
        <authorList>
            <consortium name="US DOE Joint Genome Institute"/>
            <person name="Lucas S."/>
            <person name="Copeland A."/>
            <person name="Lapidus A."/>
            <person name="Glavina del Rio T."/>
            <person name="Dalin E."/>
            <person name="Tice H."/>
            <person name="Bruce D."/>
            <person name="Goodwin L."/>
            <person name="Pitluck S."/>
            <person name="Chertkov O."/>
            <person name="Meincke L."/>
            <person name="Brettin T."/>
            <person name="Detter J.C."/>
            <person name="Han C."/>
            <person name="Tapia R."/>
            <person name="Kuske C.R."/>
            <person name="Schmutz J."/>
            <person name="Larimer F."/>
            <person name="Land M."/>
            <person name="Hauser L."/>
            <person name="Kyrpides N."/>
            <person name="Mikhailova N."/>
            <person name="Sung Y."/>
            <person name="Fletcher K.E."/>
            <person name="Ritalahti K.M."/>
            <person name="Loeffler F.E."/>
            <person name="Richardson P."/>
        </authorList>
    </citation>
    <scope>NUCLEOTIDE SEQUENCE [LARGE SCALE GENOMIC DNA]</scope>
    <source>
        <strain>ATCC BAA-1151 / DSM 17278 / SZ</strain>
    </source>
</reference>
<feature type="chain" id="PRO_1000120863" description="NAD kinase">
    <location>
        <begin position="1"/>
        <end position="285"/>
    </location>
</feature>
<feature type="active site" description="Proton acceptor" evidence="1">
    <location>
        <position position="67"/>
    </location>
</feature>
<feature type="binding site" evidence="1">
    <location>
        <begin position="67"/>
        <end position="68"/>
    </location>
    <ligand>
        <name>NAD(+)</name>
        <dbReference type="ChEBI" id="CHEBI:57540"/>
    </ligand>
</feature>
<feature type="binding site" evidence="1">
    <location>
        <begin position="141"/>
        <end position="142"/>
    </location>
    <ligand>
        <name>NAD(+)</name>
        <dbReference type="ChEBI" id="CHEBI:57540"/>
    </ligand>
</feature>
<feature type="binding site" evidence="1">
    <location>
        <position position="152"/>
    </location>
    <ligand>
        <name>NAD(+)</name>
        <dbReference type="ChEBI" id="CHEBI:57540"/>
    </ligand>
</feature>
<feature type="binding site" evidence="1">
    <location>
        <position position="169"/>
    </location>
    <ligand>
        <name>NAD(+)</name>
        <dbReference type="ChEBI" id="CHEBI:57540"/>
    </ligand>
</feature>
<feature type="binding site" evidence="1">
    <location>
        <position position="171"/>
    </location>
    <ligand>
        <name>NAD(+)</name>
        <dbReference type="ChEBI" id="CHEBI:57540"/>
    </ligand>
</feature>
<feature type="binding site" evidence="1">
    <location>
        <begin position="182"/>
        <end position="187"/>
    </location>
    <ligand>
        <name>NAD(+)</name>
        <dbReference type="ChEBI" id="CHEBI:57540"/>
    </ligand>
</feature>
<feature type="binding site" evidence="1">
    <location>
        <position position="242"/>
    </location>
    <ligand>
        <name>NAD(+)</name>
        <dbReference type="ChEBI" id="CHEBI:57540"/>
    </ligand>
</feature>
<keyword id="KW-0067">ATP-binding</keyword>
<keyword id="KW-0963">Cytoplasm</keyword>
<keyword id="KW-0418">Kinase</keyword>
<keyword id="KW-0520">NAD</keyword>
<keyword id="KW-0521">NADP</keyword>
<keyword id="KW-0547">Nucleotide-binding</keyword>
<keyword id="KW-1185">Reference proteome</keyword>
<keyword id="KW-0808">Transferase</keyword>
<comment type="function">
    <text evidence="1">Involved in the regulation of the intracellular balance of NAD and NADP, and is a key enzyme in the biosynthesis of NADP. Catalyzes specifically the phosphorylation on 2'-hydroxyl of the adenosine moiety of NAD to yield NADP.</text>
</comment>
<comment type="catalytic activity">
    <reaction evidence="1">
        <text>NAD(+) + ATP = ADP + NADP(+) + H(+)</text>
        <dbReference type="Rhea" id="RHEA:18629"/>
        <dbReference type="ChEBI" id="CHEBI:15378"/>
        <dbReference type="ChEBI" id="CHEBI:30616"/>
        <dbReference type="ChEBI" id="CHEBI:57540"/>
        <dbReference type="ChEBI" id="CHEBI:58349"/>
        <dbReference type="ChEBI" id="CHEBI:456216"/>
        <dbReference type="EC" id="2.7.1.23"/>
    </reaction>
</comment>
<comment type="cofactor">
    <cofactor evidence="1">
        <name>a divalent metal cation</name>
        <dbReference type="ChEBI" id="CHEBI:60240"/>
    </cofactor>
</comment>
<comment type="subcellular location">
    <subcellularLocation>
        <location evidence="1">Cytoplasm</location>
    </subcellularLocation>
</comment>
<comment type="similarity">
    <text evidence="1">Belongs to the NAD kinase family.</text>
</comment>
<organism>
    <name type="scientific">Trichlorobacter lovleyi (strain ATCC BAA-1151 / DSM 17278 / SZ)</name>
    <name type="common">Geobacter lovleyi</name>
    <dbReference type="NCBI Taxonomy" id="398767"/>
    <lineage>
        <taxon>Bacteria</taxon>
        <taxon>Pseudomonadati</taxon>
        <taxon>Thermodesulfobacteriota</taxon>
        <taxon>Desulfuromonadia</taxon>
        <taxon>Geobacterales</taxon>
        <taxon>Geobacteraceae</taxon>
        <taxon>Trichlorobacter</taxon>
    </lineage>
</organism>
<proteinExistence type="inferred from homology"/>